<accession>Q26756</accession>
<gene>
    <name type="primary">GPD</name>
</gene>
<reference key="1">
    <citation type="journal article" date="1996" name="Mol. Biochem. Parasitol.">
        <title>Molecular characterization of glycosomal NAD(+)-dependent glycerol 3-phosphate dehydrogenase from Trypanosoma brucei rhodesiense.</title>
        <authorList>
            <person name="Stebeck C.E."/>
            <person name="Frevert U."/>
            <person name="Mommsen T.P."/>
            <person name="Vassella E."/>
            <person name="Roditi I."/>
            <person name="Pearson T.W."/>
        </authorList>
    </citation>
    <scope>NUCLEOTIDE SEQUENCE [GENOMIC DNA]</scope>
    <source>
        <strain>ViTat 1.1</strain>
    </source>
</reference>
<protein>
    <recommendedName>
        <fullName>Glycerol-3-phosphate dehydrogenase [NAD(+)], glycosomal</fullName>
        <ecNumber>1.1.1.8</ecNumber>
    </recommendedName>
</protein>
<name>GPDA_TRYBR</name>
<proteinExistence type="inferred from homology"/>
<dbReference type="EC" id="1.1.1.8"/>
<dbReference type="EMBL" id="X91142">
    <property type="protein sequence ID" value="CAA62581.1"/>
    <property type="molecule type" value="Genomic_DNA"/>
</dbReference>
<dbReference type="SMR" id="Q26756"/>
<dbReference type="GO" id="GO:0005829">
    <property type="term" value="C:cytosol"/>
    <property type="evidence" value="ECO:0007669"/>
    <property type="project" value="TreeGrafter"/>
</dbReference>
<dbReference type="GO" id="GO:0020015">
    <property type="term" value="C:glycosome"/>
    <property type="evidence" value="ECO:0007669"/>
    <property type="project" value="UniProtKB-SubCell"/>
</dbReference>
<dbReference type="GO" id="GO:0141152">
    <property type="term" value="F:glycerol-3-phosphate dehydrogenase (NAD+) activity"/>
    <property type="evidence" value="ECO:0007669"/>
    <property type="project" value="UniProtKB-EC"/>
</dbReference>
<dbReference type="GO" id="GO:0051287">
    <property type="term" value="F:NAD binding"/>
    <property type="evidence" value="ECO:0007669"/>
    <property type="project" value="InterPro"/>
</dbReference>
<dbReference type="GO" id="GO:0042803">
    <property type="term" value="F:protein homodimerization activity"/>
    <property type="evidence" value="ECO:0007669"/>
    <property type="project" value="InterPro"/>
</dbReference>
<dbReference type="GO" id="GO:0005975">
    <property type="term" value="P:carbohydrate metabolic process"/>
    <property type="evidence" value="ECO:0007669"/>
    <property type="project" value="InterPro"/>
</dbReference>
<dbReference type="GO" id="GO:0046168">
    <property type="term" value="P:glycerol-3-phosphate catabolic process"/>
    <property type="evidence" value="ECO:0007669"/>
    <property type="project" value="InterPro"/>
</dbReference>
<dbReference type="FunFam" id="1.10.1040.10:FF:000001">
    <property type="entry name" value="Glycerol-3-phosphate dehydrogenase [NAD(P)+]"/>
    <property type="match status" value="1"/>
</dbReference>
<dbReference type="FunFam" id="3.40.50.720:FF:000019">
    <property type="entry name" value="Glycerol-3-phosphate dehydrogenase [NAD(P)+]"/>
    <property type="match status" value="1"/>
</dbReference>
<dbReference type="Gene3D" id="1.10.1040.10">
    <property type="entry name" value="N-(1-d-carboxylethyl)-l-norvaline Dehydrogenase, domain 2"/>
    <property type="match status" value="1"/>
</dbReference>
<dbReference type="Gene3D" id="3.40.50.720">
    <property type="entry name" value="NAD(P)-binding Rossmann-like Domain"/>
    <property type="match status" value="1"/>
</dbReference>
<dbReference type="HAMAP" id="MF_00394">
    <property type="entry name" value="NAD_Glyc3P_dehydrog"/>
    <property type="match status" value="1"/>
</dbReference>
<dbReference type="InterPro" id="IPR008927">
    <property type="entry name" value="6-PGluconate_DH-like_C_sf"/>
</dbReference>
<dbReference type="InterPro" id="IPR013328">
    <property type="entry name" value="6PGD_dom2"/>
</dbReference>
<dbReference type="InterPro" id="IPR006168">
    <property type="entry name" value="G3P_DH_NAD-dep"/>
</dbReference>
<dbReference type="InterPro" id="IPR006109">
    <property type="entry name" value="G3P_DH_NAD-dep_C"/>
</dbReference>
<dbReference type="InterPro" id="IPR017751">
    <property type="entry name" value="G3P_DH_NAD-dep_euk"/>
</dbReference>
<dbReference type="InterPro" id="IPR011128">
    <property type="entry name" value="G3P_DH_NAD-dep_N"/>
</dbReference>
<dbReference type="InterPro" id="IPR036291">
    <property type="entry name" value="NAD(P)-bd_dom_sf"/>
</dbReference>
<dbReference type="NCBIfam" id="TIGR03376">
    <property type="entry name" value="glycerol3P_DH"/>
    <property type="match status" value="1"/>
</dbReference>
<dbReference type="NCBIfam" id="NF000940">
    <property type="entry name" value="PRK00094.1-2"/>
    <property type="match status" value="1"/>
</dbReference>
<dbReference type="NCBIfam" id="NF000942">
    <property type="entry name" value="PRK00094.1-4"/>
    <property type="match status" value="1"/>
</dbReference>
<dbReference type="PANTHER" id="PTHR11728">
    <property type="entry name" value="GLYCEROL-3-PHOSPHATE DEHYDROGENASE"/>
    <property type="match status" value="1"/>
</dbReference>
<dbReference type="PANTHER" id="PTHR11728:SF1">
    <property type="entry name" value="GLYCEROL-3-PHOSPHATE DEHYDROGENASE [NAD(+)] 2, CHLOROPLASTIC"/>
    <property type="match status" value="1"/>
</dbReference>
<dbReference type="Pfam" id="PF07479">
    <property type="entry name" value="NAD_Gly3P_dh_C"/>
    <property type="match status" value="1"/>
</dbReference>
<dbReference type="Pfam" id="PF01210">
    <property type="entry name" value="NAD_Gly3P_dh_N"/>
    <property type="match status" value="1"/>
</dbReference>
<dbReference type="PIRSF" id="PIRSF000114">
    <property type="entry name" value="Glycerol-3-P_dh"/>
    <property type="match status" value="1"/>
</dbReference>
<dbReference type="PRINTS" id="PR00077">
    <property type="entry name" value="GPDHDRGNASE"/>
</dbReference>
<dbReference type="SUPFAM" id="SSF48179">
    <property type="entry name" value="6-phosphogluconate dehydrogenase C-terminal domain-like"/>
    <property type="match status" value="1"/>
</dbReference>
<dbReference type="SUPFAM" id="SSF51735">
    <property type="entry name" value="NAD(P)-binding Rossmann-fold domains"/>
    <property type="match status" value="1"/>
</dbReference>
<dbReference type="PROSITE" id="PS00957">
    <property type="entry name" value="NAD_G3PDH"/>
    <property type="match status" value="1"/>
</dbReference>
<organism>
    <name type="scientific">Trypanosoma brucei rhodesiense</name>
    <dbReference type="NCBI Taxonomy" id="31286"/>
    <lineage>
        <taxon>Eukaryota</taxon>
        <taxon>Discoba</taxon>
        <taxon>Euglenozoa</taxon>
        <taxon>Kinetoplastea</taxon>
        <taxon>Metakinetoplastina</taxon>
        <taxon>Trypanosomatida</taxon>
        <taxon>Trypanosomatidae</taxon>
        <taxon>Trypanosoma</taxon>
    </lineage>
</organism>
<feature type="chain" id="PRO_0000138084" description="Glycerol-3-phosphate dehydrogenase [NAD(+)], glycosomal">
    <location>
        <begin position="1"/>
        <end position="354"/>
    </location>
</feature>
<feature type="short sequence motif" description="Microbody targeting signal" evidence="2">
    <location>
        <begin position="352"/>
        <end position="354"/>
    </location>
</feature>
<feature type="active site" description="Proton acceptor" evidence="1">
    <location>
        <position position="203"/>
    </location>
</feature>
<feature type="binding site" evidence="1">
    <location>
        <begin position="15"/>
        <end position="20"/>
    </location>
    <ligand>
        <name>NAD(+)</name>
        <dbReference type="ChEBI" id="CHEBI:57540"/>
    </ligand>
</feature>
<feature type="binding site" evidence="1">
    <location>
        <position position="90"/>
    </location>
    <ligand>
        <name>NAD(+)</name>
        <dbReference type="ChEBI" id="CHEBI:57540"/>
    </ligand>
</feature>
<feature type="binding site" evidence="1">
    <location>
        <position position="118"/>
    </location>
    <ligand>
        <name>NAD(+)</name>
        <dbReference type="ChEBI" id="CHEBI:57540"/>
    </ligand>
</feature>
<feature type="binding site" evidence="1">
    <location>
        <position position="118"/>
    </location>
    <ligand>
        <name>substrate</name>
    </ligand>
</feature>
<feature type="binding site" evidence="1">
    <location>
        <position position="150"/>
    </location>
    <ligand>
        <name>NAD(+)</name>
        <dbReference type="ChEBI" id="CHEBI:57540"/>
    </ligand>
</feature>
<feature type="binding site" evidence="1">
    <location>
        <begin position="267"/>
        <end position="268"/>
    </location>
    <ligand>
        <name>substrate</name>
    </ligand>
</feature>
<feature type="binding site" evidence="1">
    <location>
        <position position="267"/>
    </location>
    <ligand>
        <name>NAD(+)</name>
        <dbReference type="ChEBI" id="CHEBI:57540"/>
    </ligand>
</feature>
<feature type="binding site" evidence="1">
    <location>
        <position position="293"/>
    </location>
    <ligand>
        <name>NAD(+)</name>
        <dbReference type="ChEBI" id="CHEBI:57540"/>
    </ligand>
</feature>
<comment type="catalytic activity">
    <reaction>
        <text>sn-glycerol 3-phosphate + NAD(+) = dihydroxyacetone phosphate + NADH + H(+)</text>
        <dbReference type="Rhea" id="RHEA:11092"/>
        <dbReference type="ChEBI" id="CHEBI:15378"/>
        <dbReference type="ChEBI" id="CHEBI:57540"/>
        <dbReference type="ChEBI" id="CHEBI:57597"/>
        <dbReference type="ChEBI" id="CHEBI:57642"/>
        <dbReference type="ChEBI" id="CHEBI:57945"/>
        <dbReference type="EC" id="1.1.1.8"/>
    </reaction>
</comment>
<comment type="subcellular location">
    <subcellularLocation>
        <location>Glycosome</location>
    </subcellularLocation>
</comment>
<comment type="similarity">
    <text evidence="3">Belongs to the NAD-dependent glycerol-3-phosphate dehydrogenase family.</text>
</comment>
<keyword id="KW-0327">Glycosome</keyword>
<keyword id="KW-0520">NAD</keyword>
<keyword id="KW-0560">Oxidoreductase</keyword>
<keyword id="KW-0576">Peroxisome</keyword>
<sequence>MVSGVTYLKRGAVFGSGAFGTALACVLAKKCESVSVWHMNANEARVVNQKHENVYFLPGAPLPANLTFTADAEECAKGAEIVLFVIPTQFLRGFLQKNSHILRNHVVSRNVPVVMCSKGIERSSLLFPAQILEEFLPNYPIGVIAGPSFAIEVAKGMLTNVCTAAADIDMARKIQRIMTTSDGSFRCWATTDVIGCEIASAMKNVLAIASGALKGLGTENNARAALISRGLLEIRDLTLALGGTGEAVFGLPGLGDLLLTCSSELSRNFTVGMKLGKGISLEEIKRTSKAVAEGVATAEPLERLAKKHNVHLPICHEVYNVLYANGCAKRSFKKLNSCKLADEGLPALPRTSKM</sequence>
<evidence type="ECO:0000250" key="1"/>
<evidence type="ECO:0000255" key="2"/>
<evidence type="ECO:0000305" key="3"/>